<accession>Q45FN5</accession>
<comment type="subcellular location">
    <subcellularLocation>
        <location evidence="3">Membrane</location>
        <topology evidence="3">Multi-pass membrane protein</topology>
    </subcellularLocation>
</comment>
<comment type="disruption phenotype">
    <text evidence="2">Cells show much lower levels of proteolytic activity than the wild-type, has a longer lag phase and a slightly lower growth rate and a decreased final density. It also shows attenuated virulence, deficiency in gliding motility and enhanced biofilm formation. Quantitative analysis of the thiol groups of periplasmic proteins shows that TlpB is required for the reduction of these groups.</text>
</comment>
<sequence length="367" mass="41429">MEKVKSSYLPYTIRILISFLFIISAIAKMYPSPYFAISTFEVKQLYPLGFSEIIAPWFSRILIGIELALGILILQNNFLRKLIIPITILLLAVFVGHLSYVTFLSGGNTGNCGCFGELIPMTPIQAIIKNIIAIFLLVYLFFLLSKTNDKNNFYVVIGITLATIISLFLLAPIKKNTNDFTISPIENTLIDSTKNEIIAPILKDSVITTVKVDSVKKAIPTKIEEVISTTEPTKHKSGYAKLFPKIDTGRKTLCFFVPGCDHCRKAAKELTELKQKNANFPEILIIFMNEEVDLIPDFFKETGAEYPYKIIEIIPFWNALGTGKDTPGVKYIWNGNTYKYYNGITDNKFNPIDYQALINKPFSELKK</sequence>
<keyword id="KW-0472">Membrane</keyword>
<keyword id="KW-0812">Transmembrane</keyword>
<keyword id="KW-1133">Transmembrane helix</keyword>
<proteinExistence type="predicted"/>
<reference key="1">
    <citation type="journal article" date="2006" name="Appl. Environ. Microbiol.">
        <title>A mutation in Flavobacterium psychrophilum tlpB inhibits gliding motility and induces biofilm formation.</title>
        <authorList>
            <person name="Alvarez B."/>
            <person name="Secades P."/>
            <person name="Prieto M."/>
            <person name="McBride M.J."/>
            <person name="Guijarro J.A."/>
        </authorList>
    </citation>
    <scope>NUCLEOTIDE SEQUENCE [GENOMIC DNA]</scope>
    <scope>DISRUPTION PHENOTYPE</scope>
    <source>
        <strain>THC02-90</strain>
    </source>
</reference>
<gene>
    <name type="primary">tlpB</name>
</gene>
<organism>
    <name type="scientific">Flavobacterium psychrophilum</name>
    <dbReference type="NCBI Taxonomy" id="96345"/>
    <lineage>
        <taxon>Bacteria</taxon>
        <taxon>Pseudomonadati</taxon>
        <taxon>Bacteroidota</taxon>
        <taxon>Flavobacteriia</taxon>
        <taxon>Flavobacteriales</taxon>
        <taxon>Flavobacteriaceae</taxon>
        <taxon>Flavobacterium</taxon>
    </lineage>
</organism>
<evidence type="ECO:0000255" key="1"/>
<evidence type="ECO:0000269" key="2">
    <source>
    </source>
</evidence>
<evidence type="ECO:0000305" key="3"/>
<dbReference type="EMBL" id="DQ137800">
    <property type="protein sequence ID" value="AAZ53356.1"/>
    <property type="molecule type" value="Genomic_DNA"/>
</dbReference>
<dbReference type="RefSeq" id="WP_034097692.1">
    <property type="nucleotide sequence ID" value="NZ_MTCC01000017.1"/>
</dbReference>
<dbReference type="SMR" id="Q45FN5"/>
<dbReference type="GO" id="GO:0016020">
    <property type="term" value="C:membrane"/>
    <property type="evidence" value="ECO:0007669"/>
    <property type="project" value="UniProtKB-SubCell"/>
</dbReference>
<dbReference type="GO" id="GO:0030416">
    <property type="term" value="P:methylamine metabolic process"/>
    <property type="evidence" value="ECO:0007669"/>
    <property type="project" value="InterPro"/>
</dbReference>
<dbReference type="InterPro" id="IPR009908">
    <property type="entry name" value="Methylamine_util_MauE"/>
</dbReference>
<dbReference type="InterPro" id="IPR036249">
    <property type="entry name" value="Thioredoxin-like_sf"/>
</dbReference>
<dbReference type="Pfam" id="PF07291">
    <property type="entry name" value="MauE"/>
    <property type="match status" value="1"/>
</dbReference>
<dbReference type="SUPFAM" id="SSF52833">
    <property type="entry name" value="Thioredoxin-like"/>
    <property type="match status" value="1"/>
</dbReference>
<protein>
    <recommendedName>
        <fullName>Protein TlpB</fullName>
    </recommendedName>
</protein>
<feature type="chain" id="PRO_0000316898" description="Protein TlpB">
    <location>
        <begin position="1"/>
        <end position="367"/>
    </location>
</feature>
<feature type="transmembrane region" description="Helical" evidence="1">
    <location>
        <begin position="15"/>
        <end position="35"/>
    </location>
</feature>
<feature type="transmembrane region" description="Helical" evidence="1">
    <location>
        <begin position="53"/>
        <end position="73"/>
    </location>
</feature>
<feature type="transmembrane region" description="Helical" evidence="1">
    <location>
        <begin position="83"/>
        <end position="103"/>
    </location>
</feature>
<feature type="transmembrane region" description="Helical" evidence="1">
    <location>
        <begin position="124"/>
        <end position="144"/>
    </location>
</feature>
<feature type="transmembrane region" description="Helical" evidence="1">
    <location>
        <begin position="153"/>
        <end position="173"/>
    </location>
</feature>
<name>TLPB_FLAPS</name>